<proteinExistence type="inferred from homology"/>
<dbReference type="EMBL" id="CP000087">
    <property type="protein sequence ID" value="ABE04349.1"/>
    <property type="molecule type" value="Genomic_DNA"/>
</dbReference>
<dbReference type="RefSeq" id="WP_011476961.1">
    <property type="nucleotide sequence ID" value="NC_007940.1"/>
</dbReference>
<dbReference type="SMR" id="Q1RJW5"/>
<dbReference type="KEGG" id="rbe:RBE_0268"/>
<dbReference type="eggNOG" id="COG0823">
    <property type="taxonomic scope" value="Bacteria"/>
</dbReference>
<dbReference type="HOGENOM" id="CLU_047123_0_0_5"/>
<dbReference type="OrthoDB" id="9802240at2"/>
<dbReference type="Proteomes" id="UP000001951">
    <property type="component" value="Chromosome"/>
</dbReference>
<dbReference type="GO" id="GO:0042597">
    <property type="term" value="C:periplasmic space"/>
    <property type="evidence" value="ECO:0007669"/>
    <property type="project" value="UniProtKB-SubCell"/>
</dbReference>
<dbReference type="GO" id="GO:0051301">
    <property type="term" value="P:cell division"/>
    <property type="evidence" value="ECO:0007669"/>
    <property type="project" value="UniProtKB-UniRule"/>
</dbReference>
<dbReference type="GO" id="GO:0017038">
    <property type="term" value="P:protein import"/>
    <property type="evidence" value="ECO:0007669"/>
    <property type="project" value="InterPro"/>
</dbReference>
<dbReference type="Gene3D" id="2.120.10.30">
    <property type="entry name" value="TolB, C-terminal domain"/>
    <property type="match status" value="1"/>
</dbReference>
<dbReference type="Gene3D" id="3.40.50.10070">
    <property type="entry name" value="TolB, N-terminal domain"/>
    <property type="match status" value="1"/>
</dbReference>
<dbReference type="HAMAP" id="MF_00671">
    <property type="entry name" value="TolB"/>
    <property type="match status" value="1"/>
</dbReference>
<dbReference type="InterPro" id="IPR011042">
    <property type="entry name" value="6-blade_b-propeller_TolB-like"/>
</dbReference>
<dbReference type="InterPro" id="IPR011659">
    <property type="entry name" value="PD40"/>
</dbReference>
<dbReference type="InterPro" id="IPR014167">
    <property type="entry name" value="Tol-Pal_TolB"/>
</dbReference>
<dbReference type="InterPro" id="IPR007195">
    <property type="entry name" value="TolB_N"/>
</dbReference>
<dbReference type="NCBIfam" id="TIGR02800">
    <property type="entry name" value="propeller_TolB"/>
    <property type="match status" value="1"/>
</dbReference>
<dbReference type="PANTHER" id="PTHR36842:SF1">
    <property type="entry name" value="PROTEIN TOLB"/>
    <property type="match status" value="1"/>
</dbReference>
<dbReference type="PANTHER" id="PTHR36842">
    <property type="entry name" value="PROTEIN TOLB HOMOLOG"/>
    <property type="match status" value="1"/>
</dbReference>
<dbReference type="Pfam" id="PF07676">
    <property type="entry name" value="PD40"/>
    <property type="match status" value="4"/>
</dbReference>
<dbReference type="Pfam" id="PF04052">
    <property type="entry name" value="TolB_N"/>
    <property type="match status" value="1"/>
</dbReference>
<dbReference type="SUPFAM" id="SSF52964">
    <property type="entry name" value="TolB, N-terminal domain"/>
    <property type="match status" value="1"/>
</dbReference>
<dbReference type="SUPFAM" id="SSF69304">
    <property type="entry name" value="Tricorn protease N-terminal domain"/>
    <property type="match status" value="1"/>
</dbReference>
<sequence>MKNIIYCILLLFSFNSYALETINIEHGKADPTPIAVNNFEADSASDNTVGHEIVKVISNDLKLCGLFHPISSASFIEEKTGIGYKPLFAAWRQINASLLVNGAVKKLENGKLKISFILWDTLLEKQLGGEVLELPENLWRRAAHKIADKIYEKITGDTGYFDSKIIYVAESGPDLKKVKRIALMDYDGANNRYITDGKSLVLTPRFSGSADKIFYVSYATKRRTLVYEKDLKTGKESIVGDFAGISFAPRFAPDGRKAVMSIAKNGSTHIYEIDLATKRLHKLTDGFGINTSPSYSPDGRRIVFNSDRNGVPQLYIMNSDGSNVQRISFGGGSYMAPSWSPRGDYIAFTKIIRGSEGKTFNIGVMKPYPQDDENSERVIASGYLVESPCWSPNGRVIMFAKGWPSNGKSSGKNRIYAIDLTGHNEREIKTPGDASDPEWSNLLN</sequence>
<accession>Q1RJW5</accession>
<gene>
    <name evidence="1" type="primary">tolB</name>
    <name type="ordered locus">RBE_0268</name>
</gene>
<evidence type="ECO:0000255" key="1">
    <source>
        <dbReference type="HAMAP-Rule" id="MF_00671"/>
    </source>
</evidence>
<name>TOLB_RICBR</name>
<protein>
    <recommendedName>
        <fullName evidence="1">Tol-Pal system protein TolB</fullName>
    </recommendedName>
</protein>
<feature type="signal peptide" evidence="1">
    <location>
        <begin position="1"/>
        <end position="18"/>
    </location>
</feature>
<feature type="chain" id="PRO_0000259083" description="Tol-Pal system protein TolB" evidence="1">
    <location>
        <begin position="19"/>
        <end position="444"/>
    </location>
</feature>
<reference key="1">
    <citation type="journal article" date="2006" name="PLoS Genet.">
        <title>Genome sequence of Rickettsia bellii illuminates the role of amoebae in gene exchanges between intracellular pathogens.</title>
        <authorList>
            <person name="Ogata H."/>
            <person name="La Scola B."/>
            <person name="Audic S."/>
            <person name="Renesto P."/>
            <person name="Blanc G."/>
            <person name="Robert C."/>
            <person name="Fournier P.-E."/>
            <person name="Claverie J.-M."/>
            <person name="Raoult D."/>
        </authorList>
    </citation>
    <scope>NUCLEOTIDE SEQUENCE [LARGE SCALE GENOMIC DNA]</scope>
    <source>
        <strain>RML369-C</strain>
    </source>
</reference>
<keyword id="KW-0131">Cell cycle</keyword>
<keyword id="KW-0132">Cell division</keyword>
<keyword id="KW-0574">Periplasm</keyword>
<keyword id="KW-0732">Signal</keyword>
<comment type="function">
    <text evidence="1">Part of the Tol-Pal system, which plays a role in outer membrane invagination during cell division and is important for maintaining outer membrane integrity.</text>
</comment>
<comment type="subunit">
    <text evidence="1">The Tol-Pal system is composed of five core proteins: the inner membrane proteins TolA, TolQ and TolR, the periplasmic protein TolB and the outer membrane protein Pal. They form a network linking the inner and outer membranes and the peptidoglycan layer.</text>
</comment>
<comment type="subcellular location">
    <subcellularLocation>
        <location evidence="1">Periplasm</location>
    </subcellularLocation>
</comment>
<comment type="similarity">
    <text evidence="1">Belongs to the TolB family.</text>
</comment>
<organism>
    <name type="scientific">Rickettsia bellii (strain RML369-C)</name>
    <dbReference type="NCBI Taxonomy" id="336407"/>
    <lineage>
        <taxon>Bacteria</taxon>
        <taxon>Pseudomonadati</taxon>
        <taxon>Pseudomonadota</taxon>
        <taxon>Alphaproteobacteria</taxon>
        <taxon>Rickettsiales</taxon>
        <taxon>Rickettsiaceae</taxon>
        <taxon>Rickettsieae</taxon>
        <taxon>Rickettsia</taxon>
        <taxon>belli group</taxon>
    </lineage>
</organism>